<comment type="function">
    <text evidence="1">Binds directly to 23S ribosomal RNA and is necessary for the in vitro assembly process of the 50S ribosomal subunit. It is not involved in the protein synthesizing functions of that subunit.</text>
</comment>
<comment type="similarity">
    <text evidence="1">Belongs to the bacterial ribosomal protein bL20 family.</text>
</comment>
<keyword id="KW-0687">Ribonucleoprotein</keyword>
<keyword id="KW-0689">Ribosomal protein</keyword>
<keyword id="KW-0694">RNA-binding</keyword>
<keyword id="KW-0699">rRNA-binding</keyword>
<organism>
    <name type="scientific">Neisseria gonorrhoeae (strain NCCP11945)</name>
    <dbReference type="NCBI Taxonomy" id="521006"/>
    <lineage>
        <taxon>Bacteria</taxon>
        <taxon>Pseudomonadati</taxon>
        <taxon>Pseudomonadota</taxon>
        <taxon>Betaproteobacteria</taxon>
        <taxon>Neisseriales</taxon>
        <taxon>Neisseriaceae</taxon>
        <taxon>Neisseria</taxon>
    </lineage>
</organism>
<feature type="chain" id="PRO_1000122345" description="Large ribosomal subunit protein bL20">
    <location>
        <begin position="1"/>
        <end position="119"/>
    </location>
</feature>
<accession>B4RJY6</accession>
<gene>
    <name evidence="1" type="primary">rplT</name>
    <name type="ordered locus">NGK_0446</name>
</gene>
<reference key="1">
    <citation type="journal article" date="2008" name="J. Bacteriol.">
        <title>Complete genome sequence of Neisseria gonorrhoeae NCCP11945.</title>
        <authorList>
            <person name="Chung G.T."/>
            <person name="Yoo J.S."/>
            <person name="Oh H.B."/>
            <person name="Lee Y.S."/>
            <person name="Cha S.H."/>
            <person name="Kim S.J."/>
            <person name="Yoo C.K."/>
        </authorList>
    </citation>
    <scope>NUCLEOTIDE SEQUENCE [LARGE SCALE GENOMIC DNA]</scope>
    <source>
        <strain>NCCP11945</strain>
    </source>
</reference>
<sequence length="119" mass="13680">MPRVKRGVTARARHQKIFALAKGYRGRRKNVYRVAKQAVMKAGQYAYRDRRQRKRQFRQLWIVRINAGARENGLSYSKFMNGLKRASIEIDRKVLADLAVFDKAAFAQLVEKAKAALAA</sequence>
<evidence type="ECO:0000255" key="1">
    <source>
        <dbReference type="HAMAP-Rule" id="MF_00382"/>
    </source>
</evidence>
<evidence type="ECO:0000305" key="2"/>
<name>RL20_NEIG2</name>
<dbReference type="EMBL" id="CP001050">
    <property type="protein sequence ID" value="ACF29137.1"/>
    <property type="molecule type" value="Genomic_DNA"/>
</dbReference>
<dbReference type="RefSeq" id="WP_002214103.1">
    <property type="nucleotide sequence ID" value="NC_011035.1"/>
</dbReference>
<dbReference type="SMR" id="B4RJY6"/>
<dbReference type="GeneID" id="93386451"/>
<dbReference type="KEGG" id="ngk:NGK_0446"/>
<dbReference type="HOGENOM" id="CLU_123265_0_1_4"/>
<dbReference type="Proteomes" id="UP000002564">
    <property type="component" value="Chromosome"/>
</dbReference>
<dbReference type="GO" id="GO:1990904">
    <property type="term" value="C:ribonucleoprotein complex"/>
    <property type="evidence" value="ECO:0007669"/>
    <property type="project" value="UniProtKB-KW"/>
</dbReference>
<dbReference type="GO" id="GO:0005840">
    <property type="term" value="C:ribosome"/>
    <property type="evidence" value="ECO:0007669"/>
    <property type="project" value="UniProtKB-KW"/>
</dbReference>
<dbReference type="GO" id="GO:0019843">
    <property type="term" value="F:rRNA binding"/>
    <property type="evidence" value="ECO:0007669"/>
    <property type="project" value="UniProtKB-UniRule"/>
</dbReference>
<dbReference type="GO" id="GO:0003735">
    <property type="term" value="F:structural constituent of ribosome"/>
    <property type="evidence" value="ECO:0007669"/>
    <property type="project" value="InterPro"/>
</dbReference>
<dbReference type="GO" id="GO:0000027">
    <property type="term" value="P:ribosomal large subunit assembly"/>
    <property type="evidence" value="ECO:0007669"/>
    <property type="project" value="UniProtKB-UniRule"/>
</dbReference>
<dbReference type="GO" id="GO:0006412">
    <property type="term" value="P:translation"/>
    <property type="evidence" value="ECO:0007669"/>
    <property type="project" value="InterPro"/>
</dbReference>
<dbReference type="CDD" id="cd07026">
    <property type="entry name" value="Ribosomal_L20"/>
    <property type="match status" value="1"/>
</dbReference>
<dbReference type="FunFam" id="1.10.1900.20:FF:000001">
    <property type="entry name" value="50S ribosomal protein L20"/>
    <property type="match status" value="1"/>
</dbReference>
<dbReference type="Gene3D" id="6.10.160.10">
    <property type="match status" value="1"/>
</dbReference>
<dbReference type="Gene3D" id="1.10.1900.20">
    <property type="entry name" value="Ribosomal protein L20"/>
    <property type="match status" value="1"/>
</dbReference>
<dbReference type="HAMAP" id="MF_00382">
    <property type="entry name" value="Ribosomal_bL20"/>
    <property type="match status" value="1"/>
</dbReference>
<dbReference type="InterPro" id="IPR005813">
    <property type="entry name" value="Ribosomal_bL20"/>
</dbReference>
<dbReference type="InterPro" id="IPR049946">
    <property type="entry name" value="RIBOSOMAL_L20_CS"/>
</dbReference>
<dbReference type="InterPro" id="IPR035566">
    <property type="entry name" value="Ribosomal_protein_bL20_C"/>
</dbReference>
<dbReference type="NCBIfam" id="TIGR01032">
    <property type="entry name" value="rplT_bact"/>
    <property type="match status" value="1"/>
</dbReference>
<dbReference type="PANTHER" id="PTHR10986">
    <property type="entry name" value="39S RIBOSOMAL PROTEIN L20"/>
    <property type="match status" value="1"/>
</dbReference>
<dbReference type="Pfam" id="PF00453">
    <property type="entry name" value="Ribosomal_L20"/>
    <property type="match status" value="1"/>
</dbReference>
<dbReference type="PRINTS" id="PR00062">
    <property type="entry name" value="RIBOSOMALL20"/>
</dbReference>
<dbReference type="SUPFAM" id="SSF74731">
    <property type="entry name" value="Ribosomal protein L20"/>
    <property type="match status" value="1"/>
</dbReference>
<dbReference type="PROSITE" id="PS00937">
    <property type="entry name" value="RIBOSOMAL_L20"/>
    <property type="match status" value="1"/>
</dbReference>
<protein>
    <recommendedName>
        <fullName evidence="1">Large ribosomal subunit protein bL20</fullName>
    </recommendedName>
    <alternativeName>
        <fullName evidence="2">50S ribosomal protein L20</fullName>
    </alternativeName>
</protein>
<proteinExistence type="inferred from homology"/>